<sequence>MAKEKFDRSKEHANIGTIGHVDHGKTTLTAAIATVLAKNGDSVAQSYDMIDNAPEEKERGITINTSHIEYQTDKRHYAHVDCPGHADYVKNMITGAAQMDGGILVVSAADGPMPQTREHILLSRNVGVPALVVFLNKVDMVDDEELLELVEMEVRDLLSEYDFPGDDVPVIAGSALKALEGDAQYEEKILELMEAVDTYIPTPERDSDKPFMMPVEDVFSITGRGTVATGRVERGQIKVGEEVEIIGLHDTSKTTVTGVEMFRKLLDYAEAGDNIGALLRGVAREDVQRGQVLAAPGSITPHTEFKAEVYVLSKDEGGRHTPFFSNYRPQFYFRTTDVTGVVHLPEGTEMVMPGDNVEMTVELIAPIAIEDGTRFSIREGGRTVGSGVVTEIIK</sequence>
<protein>
    <recommendedName>
        <fullName evidence="2">Elongation factor Tu</fullName>
        <shortName evidence="2">EF-Tu</shortName>
        <ecNumber evidence="2">3.6.5.3</ecNumber>
    </recommendedName>
</protein>
<evidence type="ECO:0000250" key="1"/>
<evidence type="ECO:0000255" key="2">
    <source>
        <dbReference type="HAMAP-Rule" id="MF_00118"/>
    </source>
</evidence>
<organism>
    <name type="scientific">Staphylococcus aureus (strain Mu3 / ATCC 700698)</name>
    <dbReference type="NCBI Taxonomy" id="418127"/>
    <lineage>
        <taxon>Bacteria</taxon>
        <taxon>Bacillati</taxon>
        <taxon>Bacillota</taxon>
        <taxon>Bacilli</taxon>
        <taxon>Bacillales</taxon>
        <taxon>Staphylococcaceae</taxon>
        <taxon>Staphylococcus</taxon>
    </lineage>
</organism>
<gene>
    <name evidence="2" type="primary">tuf</name>
    <name type="ordered locus">SAHV_0546</name>
</gene>
<feature type="chain" id="PRO_1000015748" description="Elongation factor Tu">
    <location>
        <begin position="1"/>
        <end position="394"/>
    </location>
</feature>
<feature type="domain" description="tr-type G">
    <location>
        <begin position="10"/>
        <end position="204"/>
    </location>
</feature>
<feature type="region of interest" description="G1" evidence="1">
    <location>
        <begin position="19"/>
        <end position="26"/>
    </location>
</feature>
<feature type="region of interest" description="G2" evidence="1">
    <location>
        <begin position="60"/>
        <end position="64"/>
    </location>
</feature>
<feature type="region of interest" description="G3" evidence="1">
    <location>
        <begin position="81"/>
        <end position="84"/>
    </location>
</feature>
<feature type="region of interest" description="G4" evidence="1">
    <location>
        <begin position="136"/>
        <end position="139"/>
    </location>
</feature>
<feature type="region of interest" description="G5" evidence="1">
    <location>
        <begin position="174"/>
        <end position="176"/>
    </location>
</feature>
<feature type="binding site" evidence="2">
    <location>
        <begin position="19"/>
        <end position="26"/>
    </location>
    <ligand>
        <name>GTP</name>
        <dbReference type="ChEBI" id="CHEBI:37565"/>
    </ligand>
</feature>
<feature type="binding site" evidence="2">
    <location>
        <position position="26"/>
    </location>
    <ligand>
        <name>Mg(2+)</name>
        <dbReference type="ChEBI" id="CHEBI:18420"/>
    </ligand>
</feature>
<feature type="binding site" evidence="2">
    <location>
        <begin position="81"/>
        <end position="85"/>
    </location>
    <ligand>
        <name>GTP</name>
        <dbReference type="ChEBI" id="CHEBI:37565"/>
    </ligand>
</feature>
<feature type="binding site" evidence="2">
    <location>
        <begin position="136"/>
        <end position="139"/>
    </location>
    <ligand>
        <name>GTP</name>
        <dbReference type="ChEBI" id="CHEBI:37565"/>
    </ligand>
</feature>
<accession>A7WYX6</accession>
<comment type="function">
    <text evidence="2">GTP hydrolase that promotes the GTP-dependent binding of aminoacyl-tRNA to the A-site of ribosomes during protein biosynthesis.</text>
</comment>
<comment type="catalytic activity">
    <reaction evidence="2">
        <text>GTP + H2O = GDP + phosphate + H(+)</text>
        <dbReference type="Rhea" id="RHEA:19669"/>
        <dbReference type="ChEBI" id="CHEBI:15377"/>
        <dbReference type="ChEBI" id="CHEBI:15378"/>
        <dbReference type="ChEBI" id="CHEBI:37565"/>
        <dbReference type="ChEBI" id="CHEBI:43474"/>
        <dbReference type="ChEBI" id="CHEBI:58189"/>
        <dbReference type="EC" id="3.6.5.3"/>
    </reaction>
    <physiologicalReaction direction="left-to-right" evidence="2">
        <dbReference type="Rhea" id="RHEA:19670"/>
    </physiologicalReaction>
</comment>
<comment type="subunit">
    <text evidence="2">Monomer.</text>
</comment>
<comment type="subcellular location">
    <subcellularLocation>
        <location evidence="2">Cytoplasm</location>
    </subcellularLocation>
</comment>
<comment type="similarity">
    <text evidence="2">Belongs to the TRAFAC class translation factor GTPase superfamily. Classic translation factor GTPase family. EF-Tu/EF-1A subfamily.</text>
</comment>
<dbReference type="EC" id="3.6.5.3" evidence="2"/>
<dbReference type="EMBL" id="AP009324">
    <property type="protein sequence ID" value="BAF77429.1"/>
    <property type="molecule type" value="Genomic_DNA"/>
</dbReference>
<dbReference type="RefSeq" id="WP_001040568.1">
    <property type="nucleotide sequence ID" value="NZ_CTYB01000013.1"/>
</dbReference>
<dbReference type="SMR" id="A7WYX6"/>
<dbReference type="KEGG" id="saw:SAHV_0546"/>
<dbReference type="HOGENOM" id="CLU_007265_0_0_9"/>
<dbReference type="GO" id="GO:0005829">
    <property type="term" value="C:cytosol"/>
    <property type="evidence" value="ECO:0007669"/>
    <property type="project" value="TreeGrafter"/>
</dbReference>
<dbReference type="GO" id="GO:0005525">
    <property type="term" value="F:GTP binding"/>
    <property type="evidence" value="ECO:0007669"/>
    <property type="project" value="UniProtKB-UniRule"/>
</dbReference>
<dbReference type="GO" id="GO:0003924">
    <property type="term" value="F:GTPase activity"/>
    <property type="evidence" value="ECO:0007669"/>
    <property type="project" value="InterPro"/>
</dbReference>
<dbReference type="GO" id="GO:0003746">
    <property type="term" value="F:translation elongation factor activity"/>
    <property type="evidence" value="ECO:0007669"/>
    <property type="project" value="UniProtKB-UniRule"/>
</dbReference>
<dbReference type="CDD" id="cd01884">
    <property type="entry name" value="EF_Tu"/>
    <property type="match status" value="1"/>
</dbReference>
<dbReference type="CDD" id="cd03697">
    <property type="entry name" value="EFTU_II"/>
    <property type="match status" value="1"/>
</dbReference>
<dbReference type="CDD" id="cd03707">
    <property type="entry name" value="EFTU_III"/>
    <property type="match status" value="1"/>
</dbReference>
<dbReference type="FunFam" id="2.40.30.10:FF:000001">
    <property type="entry name" value="Elongation factor Tu"/>
    <property type="match status" value="1"/>
</dbReference>
<dbReference type="FunFam" id="3.40.50.300:FF:000003">
    <property type="entry name" value="Elongation factor Tu"/>
    <property type="match status" value="1"/>
</dbReference>
<dbReference type="Gene3D" id="3.40.50.300">
    <property type="entry name" value="P-loop containing nucleotide triphosphate hydrolases"/>
    <property type="match status" value="1"/>
</dbReference>
<dbReference type="Gene3D" id="2.40.30.10">
    <property type="entry name" value="Translation factors"/>
    <property type="match status" value="2"/>
</dbReference>
<dbReference type="HAMAP" id="MF_00118_B">
    <property type="entry name" value="EF_Tu_B"/>
    <property type="match status" value="1"/>
</dbReference>
<dbReference type="InterPro" id="IPR041709">
    <property type="entry name" value="EF-Tu_GTP-bd"/>
</dbReference>
<dbReference type="InterPro" id="IPR050055">
    <property type="entry name" value="EF-Tu_GTPase"/>
</dbReference>
<dbReference type="InterPro" id="IPR004161">
    <property type="entry name" value="EFTu-like_2"/>
</dbReference>
<dbReference type="InterPro" id="IPR033720">
    <property type="entry name" value="EFTU_2"/>
</dbReference>
<dbReference type="InterPro" id="IPR031157">
    <property type="entry name" value="G_TR_CS"/>
</dbReference>
<dbReference type="InterPro" id="IPR027417">
    <property type="entry name" value="P-loop_NTPase"/>
</dbReference>
<dbReference type="InterPro" id="IPR005225">
    <property type="entry name" value="Small_GTP-bd"/>
</dbReference>
<dbReference type="InterPro" id="IPR000795">
    <property type="entry name" value="T_Tr_GTP-bd_dom"/>
</dbReference>
<dbReference type="InterPro" id="IPR009000">
    <property type="entry name" value="Transl_B-barrel_sf"/>
</dbReference>
<dbReference type="InterPro" id="IPR009001">
    <property type="entry name" value="Transl_elong_EF1A/Init_IF2_C"/>
</dbReference>
<dbReference type="InterPro" id="IPR004541">
    <property type="entry name" value="Transl_elong_EFTu/EF1A_bac/org"/>
</dbReference>
<dbReference type="InterPro" id="IPR004160">
    <property type="entry name" value="Transl_elong_EFTu/EF1A_C"/>
</dbReference>
<dbReference type="NCBIfam" id="TIGR00485">
    <property type="entry name" value="EF-Tu"/>
    <property type="match status" value="1"/>
</dbReference>
<dbReference type="NCBIfam" id="NF000766">
    <property type="entry name" value="PRK00049.1"/>
    <property type="match status" value="1"/>
</dbReference>
<dbReference type="NCBIfam" id="NF009372">
    <property type="entry name" value="PRK12735.1"/>
    <property type="match status" value="1"/>
</dbReference>
<dbReference type="NCBIfam" id="NF009373">
    <property type="entry name" value="PRK12736.1"/>
    <property type="match status" value="1"/>
</dbReference>
<dbReference type="NCBIfam" id="TIGR00231">
    <property type="entry name" value="small_GTP"/>
    <property type="match status" value="1"/>
</dbReference>
<dbReference type="PANTHER" id="PTHR43721:SF22">
    <property type="entry name" value="ELONGATION FACTOR TU, MITOCHONDRIAL"/>
    <property type="match status" value="1"/>
</dbReference>
<dbReference type="PANTHER" id="PTHR43721">
    <property type="entry name" value="ELONGATION FACTOR TU-RELATED"/>
    <property type="match status" value="1"/>
</dbReference>
<dbReference type="Pfam" id="PF00009">
    <property type="entry name" value="GTP_EFTU"/>
    <property type="match status" value="1"/>
</dbReference>
<dbReference type="Pfam" id="PF03144">
    <property type="entry name" value="GTP_EFTU_D2"/>
    <property type="match status" value="1"/>
</dbReference>
<dbReference type="Pfam" id="PF03143">
    <property type="entry name" value="GTP_EFTU_D3"/>
    <property type="match status" value="1"/>
</dbReference>
<dbReference type="PRINTS" id="PR00315">
    <property type="entry name" value="ELONGATNFCT"/>
</dbReference>
<dbReference type="SUPFAM" id="SSF50465">
    <property type="entry name" value="EF-Tu/eEF-1alpha/eIF2-gamma C-terminal domain"/>
    <property type="match status" value="1"/>
</dbReference>
<dbReference type="SUPFAM" id="SSF52540">
    <property type="entry name" value="P-loop containing nucleoside triphosphate hydrolases"/>
    <property type="match status" value="1"/>
</dbReference>
<dbReference type="SUPFAM" id="SSF50447">
    <property type="entry name" value="Translation proteins"/>
    <property type="match status" value="1"/>
</dbReference>
<dbReference type="PROSITE" id="PS00301">
    <property type="entry name" value="G_TR_1"/>
    <property type="match status" value="1"/>
</dbReference>
<dbReference type="PROSITE" id="PS51722">
    <property type="entry name" value="G_TR_2"/>
    <property type="match status" value="1"/>
</dbReference>
<keyword id="KW-0963">Cytoplasm</keyword>
<keyword id="KW-0251">Elongation factor</keyword>
<keyword id="KW-0342">GTP-binding</keyword>
<keyword id="KW-0378">Hydrolase</keyword>
<keyword id="KW-0460">Magnesium</keyword>
<keyword id="KW-0479">Metal-binding</keyword>
<keyword id="KW-0547">Nucleotide-binding</keyword>
<keyword id="KW-0648">Protein biosynthesis</keyword>
<name>EFTU_STAA1</name>
<proteinExistence type="inferred from homology"/>
<reference key="1">
    <citation type="journal article" date="2008" name="Antimicrob. Agents Chemother.">
        <title>Mutated response regulator graR is responsible for phenotypic conversion of Staphylococcus aureus from heterogeneous vancomycin-intermediate resistance to vancomycin-intermediate resistance.</title>
        <authorList>
            <person name="Neoh H.-M."/>
            <person name="Cui L."/>
            <person name="Yuzawa H."/>
            <person name="Takeuchi F."/>
            <person name="Matsuo M."/>
            <person name="Hiramatsu K."/>
        </authorList>
    </citation>
    <scope>NUCLEOTIDE SEQUENCE [LARGE SCALE GENOMIC DNA]</scope>
    <source>
        <strain>Mu3 / ATCC 700698</strain>
    </source>
</reference>